<name>DTD_CLOPE</name>
<protein>
    <recommendedName>
        <fullName evidence="1">D-aminoacyl-tRNA deacylase</fullName>
        <shortName evidence="1">DTD</shortName>
        <ecNumber evidence="1">3.1.1.96</ecNumber>
    </recommendedName>
    <alternativeName>
        <fullName evidence="1">Gly-tRNA(Ala) deacylase</fullName>
    </alternativeName>
</protein>
<sequence>MRVVVQRVNKSSVKVDNEIVGSINKGFNVLVGIGKEDTIEDLKYMKDKVLNLRVFEDEEDKMNLSLKDVCGELLLISQFTLYGDCRKGRRPNFMNALGGDEAKKLFDEFVSMCREEGIKVETGVFGAHMVVDIENDGPVTLILDSKKNF</sequence>
<evidence type="ECO:0000255" key="1">
    <source>
        <dbReference type="HAMAP-Rule" id="MF_00518"/>
    </source>
</evidence>
<reference key="1">
    <citation type="journal article" date="2002" name="Proc. Natl. Acad. Sci. U.S.A.">
        <title>Complete genome sequence of Clostridium perfringens, an anaerobic flesh-eater.</title>
        <authorList>
            <person name="Shimizu T."/>
            <person name="Ohtani K."/>
            <person name="Hirakawa H."/>
            <person name="Ohshima K."/>
            <person name="Yamashita A."/>
            <person name="Shiba T."/>
            <person name="Ogasawara N."/>
            <person name="Hattori M."/>
            <person name="Kuhara S."/>
            <person name="Hayashi H."/>
        </authorList>
    </citation>
    <scope>NUCLEOTIDE SEQUENCE [LARGE SCALE GENOMIC DNA]</scope>
    <source>
        <strain>13 / Type A</strain>
    </source>
</reference>
<gene>
    <name evidence="1" type="primary">dtd</name>
    <name type="ordered locus">CPE1937</name>
</gene>
<comment type="function">
    <text evidence="1">An aminoacyl-tRNA editing enzyme that deacylates mischarged D-aminoacyl-tRNAs. Also deacylates mischarged glycyl-tRNA(Ala), protecting cells against glycine mischarging by AlaRS. Acts via tRNA-based rather than protein-based catalysis; rejects L-amino acids rather than detecting D-amino acids in the active site. By recycling D-aminoacyl-tRNA to D-amino acids and free tRNA molecules, this enzyme counteracts the toxicity associated with the formation of D-aminoacyl-tRNA entities in vivo and helps enforce protein L-homochirality.</text>
</comment>
<comment type="catalytic activity">
    <reaction evidence="1">
        <text>glycyl-tRNA(Ala) + H2O = tRNA(Ala) + glycine + H(+)</text>
        <dbReference type="Rhea" id="RHEA:53744"/>
        <dbReference type="Rhea" id="RHEA-COMP:9657"/>
        <dbReference type="Rhea" id="RHEA-COMP:13640"/>
        <dbReference type="ChEBI" id="CHEBI:15377"/>
        <dbReference type="ChEBI" id="CHEBI:15378"/>
        <dbReference type="ChEBI" id="CHEBI:57305"/>
        <dbReference type="ChEBI" id="CHEBI:78442"/>
        <dbReference type="ChEBI" id="CHEBI:78522"/>
        <dbReference type="EC" id="3.1.1.96"/>
    </reaction>
</comment>
<comment type="catalytic activity">
    <reaction evidence="1">
        <text>a D-aminoacyl-tRNA + H2O = a tRNA + a D-alpha-amino acid + H(+)</text>
        <dbReference type="Rhea" id="RHEA:13953"/>
        <dbReference type="Rhea" id="RHEA-COMP:10123"/>
        <dbReference type="Rhea" id="RHEA-COMP:10124"/>
        <dbReference type="ChEBI" id="CHEBI:15377"/>
        <dbReference type="ChEBI" id="CHEBI:15378"/>
        <dbReference type="ChEBI" id="CHEBI:59871"/>
        <dbReference type="ChEBI" id="CHEBI:78442"/>
        <dbReference type="ChEBI" id="CHEBI:79333"/>
        <dbReference type="EC" id="3.1.1.96"/>
    </reaction>
</comment>
<comment type="subunit">
    <text evidence="1">Homodimer.</text>
</comment>
<comment type="subcellular location">
    <subcellularLocation>
        <location evidence="1">Cytoplasm</location>
    </subcellularLocation>
</comment>
<comment type="domain">
    <text evidence="1">A Gly-cisPro motif from one monomer fits into the active site of the other monomer to allow specific chiral rejection of L-amino acids.</text>
</comment>
<comment type="similarity">
    <text evidence="1">Belongs to the DTD family.</text>
</comment>
<dbReference type="EC" id="3.1.1.96" evidence="1"/>
<dbReference type="EMBL" id="BA000016">
    <property type="protein sequence ID" value="BAB81643.1"/>
    <property type="molecule type" value="Genomic_DNA"/>
</dbReference>
<dbReference type="RefSeq" id="WP_003451157.1">
    <property type="nucleotide sequence ID" value="NC_003366.1"/>
</dbReference>
<dbReference type="SMR" id="Q8XJ24"/>
<dbReference type="STRING" id="195102.gene:10491206"/>
<dbReference type="GeneID" id="93001527"/>
<dbReference type="KEGG" id="cpe:CPE1937"/>
<dbReference type="HOGENOM" id="CLU_076901_1_0_9"/>
<dbReference type="Proteomes" id="UP000000818">
    <property type="component" value="Chromosome"/>
</dbReference>
<dbReference type="GO" id="GO:0005737">
    <property type="term" value="C:cytoplasm"/>
    <property type="evidence" value="ECO:0007669"/>
    <property type="project" value="UniProtKB-SubCell"/>
</dbReference>
<dbReference type="GO" id="GO:0051500">
    <property type="term" value="F:D-tyrosyl-tRNA(Tyr) deacylase activity"/>
    <property type="evidence" value="ECO:0007669"/>
    <property type="project" value="TreeGrafter"/>
</dbReference>
<dbReference type="GO" id="GO:0106026">
    <property type="term" value="F:Gly-tRNA(Ala) deacylase activity"/>
    <property type="evidence" value="ECO:0007669"/>
    <property type="project" value="UniProtKB-UniRule"/>
</dbReference>
<dbReference type="GO" id="GO:0043908">
    <property type="term" value="F:Ser(Gly)-tRNA(Ala) hydrolase activity"/>
    <property type="evidence" value="ECO:0007669"/>
    <property type="project" value="UniProtKB-UniRule"/>
</dbReference>
<dbReference type="GO" id="GO:0000049">
    <property type="term" value="F:tRNA binding"/>
    <property type="evidence" value="ECO:0007669"/>
    <property type="project" value="UniProtKB-UniRule"/>
</dbReference>
<dbReference type="GO" id="GO:0019478">
    <property type="term" value="P:D-amino acid catabolic process"/>
    <property type="evidence" value="ECO:0007669"/>
    <property type="project" value="UniProtKB-UniRule"/>
</dbReference>
<dbReference type="CDD" id="cd00563">
    <property type="entry name" value="Dtyr_deacylase"/>
    <property type="match status" value="1"/>
</dbReference>
<dbReference type="FunFam" id="3.50.80.10:FF:000001">
    <property type="entry name" value="D-aminoacyl-tRNA deacylase"/>
    <property type="match status" value="1"/>
</dbReference>
<dbReference type="Gene3D" id="3.50.80.10">
    <property type="entry name" value="D-tyrosyl-tRNA(Tyr) deacylase"/>
    <property type="match status" value="1"/>
</dbReference>
<dbReference type="HAMAP" id="MF_00518">
    <property type="entry name" value="Deacylase_Dtd"/>
    <property type="match status" value="1"/>
</dbReference>
<dbReference type="InterPro" id="IPR003732">
    <property type="entry name" value="Daa-tRNA_deacyls_DTD"/>
</dbReference>
<dbReference type="InterPro" id="IPR023509">
    <property type="entry name" value="DTD-like_sf"/>
</dbReference>
<dbReference type="NCBIfam" id="TIGR00256">
    <property type="entry name" value="D-aminoacyl-tRNA deacylase"/>
    <property type="match status" value="1"/>
</dbReference>
<dbReference type="PANTHER" id="PTHR10472:SF5">
    <property type="entry name" value="D-AMINOACYL-TRNA DEACYLASE 1"/>
    <property type="match status" value="1"/>
</dbReference>
<dbReference type="PANTHER" id="PTHR10472">
    <property type="entry name" value="D-TYROSYL-TRNA TYR DEACYLASE"/>
    <property type="match status" value="1"/>
</dbReference>
<dbReference type="Pfam" id="PF02580">
    <property type="entry name" value="Tyr_Deacylase"/>
    <property type="match status" value="1"/>
</dbReference>
<dbReference type="SUPFAM" id="SSF69500">
    <property type="entry name" value="DTD-like"/>
    <property type="match status" value="1"/>
</dbReference>
<feature type="chain" id="PRO_0000164531" description="D-aminoacyl-tRNA deacylase">
    <location>
        <begin position="1"/>
        <end position="149"/>
    </location>
</feature>
<feature type="short sequence motif" description="Gly-cisPro motif, important for rejection of L-amino acids" evidence="1">
    <location>
        <begin position="137"/>
        <end position="138"/>
    </location>
</feature>
<proteinExistence type="inferred from homology"/>
<keyword id="KW-0963">Cytoplasm</keyword>
<keyword id="KW-0378">Hydrolase</keyword>
<keyword id="KW-1185">Reference proteome</keyword>
<keyword id="KW-0694">RNA-binding</keyword>
<keyword id="KW-0820">tRNA-binding</keyword>
<accession>Q8XJ24</accession>
<organism>
    <name type="scientific">Clostridium perfringens (strain 13 / Type A)</name>
    <dbReference type="NCBI Taxonomy" id="195102"/>
    <lineage>
        <taxon>Bacteria</taxon>
        <taxon>Bacillati</taxon>
        <taxon>Bacillota</taxon>
        <taxon>Clostridia</taxon>
        <taxon>Eubacteriales</taxon>
        <taxon>Clostridiaceae</taxon>
        <taxon>Clostridium</taxon>
    </lineage>
</organism>